<evidence type="ECO:0000255" key="1">
    <source>
        <dbReference type="HAMAP-Rule" id="MF_01332"/>
    </source>
</evidence>
<evidence type="ECO:0000305" key="2"/>
<proteinExistence type="inferred from homology"/>
<gene>
    <name evidence="1" type="primary">secM</name>
    <name type="ordered locus">STM0135</name>
</gene>
<accession>Q8ZRT8</accession>
<dbReference type="EMBL" id="AE006468">
    <property type="protein sequence ID" value="AAL19099.1"/>
    <property type="status" value="ALT_INIT"/>
    <property type="molecule type" value="Genomic_DNA"/>
</dbReference>
<dbReference type="RefSeq" id="WP_001573772.1">
    <property type="nucleotide sequence ID" value="NC_003197.2"/>
</dbReference>
<dbReference type="SMR" id="Q8ZRT8"/>
<dbReference type="STRING" id="99287.STM0135"/>
<dbReference type="PaxDb" id="99287-STM0135"/>
<dbReference type="KEGG" id="stm:STM0135"/>
<dbReference type="PATRIC" id="fig|99287.12.peg.141"/>
<dbReference type="HOGENOM" id="CLU_108853_0_0_6"/>
<dbReference type="OMA" id="NYWQQHA"/>
<dbReference type="PhylomeDB" id="Q8ZRT8"/>
<dbReference type="Proteomes" id="UP000001014">
    <property type="component" value="Chromosome"/>
</dbReference>
<dbReference type="GO" id="GO:0005829">
    <property type="term" value="C:cytosol"/>
    <property type="evidence" value="ECO:0007669"/>
    <property type="project" value="UniProtKB-SubCell"/>
</dbReference>
<dbReference type="GO" id="GO:0042597">
    <property type="term" value="C:periplasmic space"/>
    <property type="evidence" value="ECO:0007669"/>
    <property type="project" value="UniProtKB-SubCell"/>
</dbReference>
<dbReference type="GO" id="GO:0045182">
    <property type="term" value="F:translation regulator activity"/>
    <property type="evidence" value="ECO:0007669"/>
    <property type="project" value="InterPro"/>
</dbReference>
<dbReference type="HAMAP" id="MF_01332">
    <property type="entry name" value="SecM"/>
    <property type="match status" value="1"/>
</dbReference>
<dbReference type="InterPro" id="IPR009502">
    <property type="entry name" value="SecM"/>
</dbReference>
<dbReference type="NCBIfam" id="NF002799">
    <property type="entry name" value="PRK02943.1-1"/>
    <property type="match status" value="1"/>
</dbReference>
<dbReference type="Pfam" id="PF06558">
    <property type="entry name" value="SecM"/>
    <property type="match status" value="1"/>
</dbReference>
<dbReference type="PIRSF" id="PIRSF004572">
    <property type="entry name" value="SecM"/>
    <property type="match status" value="1"/>
</dbReference>
<protein>
    <recommendedName>
        <fullName evidence="1">Secretion monitor</fullName>
    </recommendedName>
</protein>
<name>SECM_SALTY</name>
<keyword id="KW-0963">Cytoplasm</keyword>
<keyword id="KW-0574">Periplasm</keyword>
<keyword id="KW-1185">Reference proteome</keyword>
<keyword id="KW-0732">Signal</keyword>
<organism>
    <name type="scientific">Salmonella typhimurium (strain LT2 / SGSC1412 / ATCC 700720)</name>
    <dbReference type="NCBI Taxonomy" id="99287"/>
    <lineage>
        <taxon>Bacteria</taxon>
        <taxon>Pseudomonadati</taxon>
        <taxon>Pseudomonadota</taxon>
        <taxon>Gammaproteobacteria</taxon>
        <taxon>Enterobacterales</taxon>
        <taxon>Enterobacteriaceae</taxon>
        <taxon>Salmonella</taxon>
    </lineage>
</organism>
<sequence length="165" mass="18151">MSGILTRWRQLGRRYFWPHLLLGMVAASFGLPALSNAAETNTPARTTASTASKVNFSHFALLEASNRRPNFTVDYWHQHAIRTVIRHLSFAMAPQTLPVADAPSPLQAHHIALLNTLSAMLTQEGTPPAIVRRLSLAYFAPQTAFSIPAWISQAQGIRAGPQRLS</sequence>
<feature type="signal peptide" evidence="1">
    <location>
        <begin position="1"/>
        <end position="37"/>
    </location>
</feature>
<feature type="chain" id="PRO_0000031992" description="Secretion monitor">
    <location>
        <begin position="38"/>
        <end position="165"/>
    </location>
</feature>
<comment type="function">
    <text evidence="1">Regulates secA expression by translational coupling of the secM secA operon. Translational pausing at a specific Pro residue 5 residues before the end of the protein may allow disruption of a mRNA repressor helix that normally suppresses secA translation initiation.</text>
</comment>
<comment type="subcellular location">
    <subcellularLocation>
        <location evidence="1">Cytoplasm</location>
        <location evidence="1">Cytosol</location>
    </subcellularLocation>
    <subcellularLocation>
        <location evidence="1">Periplasm</location>
    </subcellularLocation>
    <text evidence="1">The active form is cytosolic, while the periplasmic form is rapidly degraded, mainly by the tail-specific protease.</text>
</comment>
<comment type="similarity">
    <text evidence="1">Belongs to the SecM family.</text>
</comment>
<comment type="sequence caution" evidence="2">
    <conflict type="erroneous initiation">
        <sequence resource="EMBL-CDS" id="AAL19099"/>
    </conflict>
</comment>
<reference key="1">
    <citation type="journal article" date="2001" name="Nature">
        <title>Complete genome sequence of Salmonella enterica serovar Typhimurium LT2.</title>
        <authorList>
            <person name="McClelland M."/>
            <person name="Sanderson K.E."/>
            <person name="Spieth J."/>
            <person name="Clifton S.W."/>
            <person name="Latreille P."/>
            <person name="Courtney L."/>
            <person name="Porwollik S."/>
            <person name="Ali J."/>
            <person name="Dante M."/>
            <person name="Du F."/>
            <person name="Hou S."/>
            <person name="Layman D."/>
            <person name="Leonard S."/>
            <person name="Nguyen C."/>
            <person name="Scott K."/>
            <person name="Holmes A."/>
            <person name="Grewal N."/>
            <person name="Mulvaney E."/>
            <person name="Ryan E."/>
            <person name="Sun H."/>
            <person name="Florea L."/>
            <person name="Miller W."/>
            <person name="Stoneking T."/>
            <person name="Nhan M."/>
            <person name="Waterston R."/>
            <person name="Wilson R.K."/>
        </authorList>
    </citation>
    <scope>NUCLEOTIDE SEQUENCE [LARGE SCALE GENOMIC DNA]</scope>
    <source>
        <strain>LT2 / SGSC1412 / ATCC 700720</strain>
    </source>
</reference>